<gene>
    <name type="primary">get3</name>
    <name type="ORF">AO090003000688</name>
</gene>
<accession>Q2UKT0</accession>
<proteinExistence type="inferred from homology"/>
<organism>
    <name type="scientific">Aspergillus oryzae (strain ATCC 42149 / RIB 40)</name>
    <name type="common">Yellow koji mold</name>
    <dbReference type="NCBI Taxonomy" id="510516"/>
    <lineage>
        <taxon>Eukaryota</taxon>
        <taxon>Fungi</taxon>
        <taxon>Dikarya</taxon>
        <taxon>Ascomycota</taxon>
        <taxon>Pezizomycotina</taxon>
        <taxon>Eurotiomycetes</taxon>
        <taxon>Eurotiomycetidae</taxon>
        <taxon>Eurotiales</taxon>
        <taxon>Aspergillaceae</taxon>
        <taxon>Aspergillus</taxon>
        <taxon>Aspergillus subgen. Circumdati</taxon>
    </lineage>
</organism>
<feature type="chain" id="PRO_0000388192" description="ATPase get3">
    <location>
        <begin position="1"/>
        <end position="339"/>
    </location>
</feature>
<feature type="active site" evidence="1">
    <location>
        <position position="62"/>
    </location>
</feature>
<feature type="binding site" evidence="1">
    <location>
        <begin position="33"/>
        <end position="40"/>
    </location>
    <ligand>
        <name>ATP</name>
        <dbReference type="ChEBI" id="CHEBI:30616"/>
    </ligand>
</feature>
<feature type="binding site" evidence="1">
    <location>
        <position position="244"/>
    </location>
    <ligand>
        <name>ATP</name>
        <dbReference type="ChEBI" id="CHEBI:30616"/>
    </ligand>
</feature>
<feature type="binding site" evidence="1">
    <location>
        <position position="271"/>
    </location>
    <ligand>
        <name>ATP</name>
        <dbReference type="ChEBI" id="CHEBI:30616"/>
    </ligand>
</feature>
<feature type="binding site" evidence="1">
    <location>
        <position position="282"/>
    </location>
    <ligand>
        <name>Zn(2+)</name>
        <dbReference type="ChEBI" id="CHEBI:29105"/>
        <note>ligand shared between dimeric partners</note>
    </ligand>
</feature>
<feature type="binding site" evidence="1">
    <location>
        <position position="285"/>
    </location>
    <ligand>
        <name>Zn(2+)</name>
        <dbReference type="ChEBI" id="CHEBI:29105"/>
        <note>ligand shared between dimeric partners</note>
    </ligand>
</feature>
<dbReference type="EC" id="3.6.-.-" evidence="1"/>
<dbReference type="EMBL" id="BA000050">
    <property type="protein sequence ID" value="BAE57835.1"/>
    <property type="molecule type" value="Genomic_DNA"/>
</dbReference>
<dbReference type="RefSeq" id="XP_001819837.1">
    <property type="nucleotide sequence ID" value="XM_001819785.2"/>
</dbReference>
<dbReference type="SMR" id="Q2UKT0"/>
<dbReference type="STRING" id="510516.Q2UKT0"/>
<dbReference type="EnsemblFungi" id="BAE57835">
    <property type="protein sequence ID" value="BAE57835"/>
    <property type="gene ID" value="AO090003000688"/>
</dbReference>
<dbReference type="GeneID" id="5991820"/>
<dbReference type="KEGG" id="aor:AO090003000688"/>
<dbReference type="VEuPathDB" id="FungiDB:AO090003000688"/>
<dbReference type="HOGENOM" id="CLU_040761_0_0_1"/>
<dbReference type="OMA" id="MDAPYEF"/>
<dbReference type="OrthoDB" id="91808at5052"/>
<dbReference type="Proteomes" id="UP000006564">
    <property type="component" value="Chromosome 2"/>
</dbReference>
<dbReference type="GO" id="GO:0043529">
    <property type="term" value="C:GET complex"/>
    <property type="evidence" value="ECO:0007669"/>
    <property type="project" value="EnsemblFungi"/>
</dbReference>
<dbReference type="GO" id="GO:0005524">
    <property type="term" value="F:ATP binding"/>
    <property type="evidence" value="ECO:0007669"/>
    <property type="project" value="UniProtKB-UniRule"/>
</dbReference>
<dbReference type="GO" id="GO:0016887">
    <property type="term" value="F:ATP hydrolysis activity"/>
    <property type="evidence" value="ECO:0007669"/>
    <property type="project" value="EnsemblFungi"/>
</dbReference>
<dbReference type="GO" id="GO:0005085">
    <property type="term" value="F:guanyl-nucleotide exchange factor activity"/>
    <property type="evidence" value="ECO:0007669"/>
    <property type="project" value="EnsemblFungi"/>
</dbReference>
<dbReference type="GO" id="GO:0042802">
    <property type="term" value="F:identical protein binding"/>
    <property type="evidence" value="ECO:0007669"/>
    <property type="project" value="EnsemblFungi"/>
</dbReference>
<dbReference type="GO" id="GO:0046872">
    <property type="term" value="F:metal ion binding"/>
    <property type="evidence" value="ECO:0007669"/>
    <property type="project" value="UniProtKB-KW"/>
</dbReference>
<dbReference type="GO" id="GO:0044183">
    <property type="term" value="F:protein folding chaperone"/>
    <property type="evidence" value="ECO:0007669"/>
    <property type="project" value="EnsemblFungi"/>
</dbReference>
<dbReference type="GO" id="GO:0051082">
    <property type="term" value="F:unfolded protein binding"/>
    <property type="evidence" value="ECO:0007669"/>
    <property type="project" value="EnsemblFungi"/>
</dbReference>
<dbReference type="GO" id="GO:0034599">
    <property type="term" value="P:cellular response to oxidative stress"/>
    <property type="evidence" value="ECO:0007669"/>
    <property type="project" value="EnsemblFungi"/>
</dbReference>
<dbReference type="GO" id="GO:0000750">
    <property type="term" value="P:pheromone-dependent signal transduction involved in conjugation with cellular fusion"/>
    <property type="evidence" value="ECO:0007669"/>
    <property type="project" value="EnsemblFungi"/>
</dbReference>
<dbReference type="GO" id="GO:0006620">
    <property type="term" value="P:post-translational protein targeting to endoplasmic reticulum membrane"/>
    <property type="evidence" value="ECO:0007669"/>
    <property type="project" value="EnsemblFungi"/>
</dbReference>
<dbReference type="GO" id="GO:0009408">
    <property type="term" value="P:response to heat"/>
    <property type="evidence" value="ECO:0007669"/>
    <property type="project" value="EnsemblFungi"/>
</dbReference>
<dbReference type="GO" id="GO:0010038">
    <property type="term" value="P:response to metal ion"/>
    <property type="evidence" value="ECO:0007669"/>
    <property type="project" value="EnsemblFungi"/>
</dbReference>
<dbReference type="GO" id="GO:0006890">
    <property type="term" value="P:retrograde vesicle-mediated transport, Golgi to endoplasmic reticulum"/>
    <property type="evidence" value="ECO:0007669"/>
    <property type="project" value="EnsemblFungi"/>
</dbReference>
<dbReference type="GO" id="GO:0071816">
    <property type="term" value="P:tail-anchored membrane protein insertion into ER membrane"/>
    <property type="evidence" value="ECO:0007669"/>
    <property type="project" value="EnsemblFungi"/>
</dbReference>
<dbReference type="CDD" id="cd02035">
    <property type="entry name" value="ArsA"/>
    <property type="match status" value="1"/>
</dbReference>
<dbReference type="FunFam" id="3.40.50.300:FF:000235">
    <property type="entry name" value="ATPase ASNA1"/>
    <property type="match status" value="1"/>
</dbReference>
<dbReference type="Gene3D" id="3.40.50.300">
    <property type="entry name" value="P-loop containing nucleotide triphosphate hydrolases"/>
    <property type="match status" value="1"/>
</dbReference>
<dbReference type="HAMAP" id="MF_03112">
    <property type="entry name" value="Asna1_Get3"/>
    <property type="match status" value="1"/>
</dbReference>
<dbReference type="InterPro" id="IPR025723">
    <property type="entry name" value="Anion-transp_ATPase-like_dom"/>
</dbReference>
<dbReference type="InterPro" id="IPR016300">
    <property type="entry name" value="ATPase_ArsA/GET3"/>
</dbReference>
<dbReference type="InterPro" id="IPR027542">
    <property type="entry name" value="ATPase_ArsA/GET3_euk"/>
</dbReference>
<dbReference type="InterPro" id="IPR027417">
    <property type="entry name" value="P-loop_NTPase"/>
</dbReference>
<dbReference type="NCBIfam" id="TIGR00345">
    <property type="entry name" value="GET3_arsA_TRC40"/>
    <property type="match status" value="1"/>
</dbReference>
<dbReference type="PANTHER" id="PTHR10803">
    <property type="entry name" value="ARSENICAL PUMP-DRIVING ATPASE ARSENITE-TRANSLOCATING ATPASE"/>
    <property type="match status" value="1"/>
</dbReference>
<dbReference type="PANTHER" id="PTHR10803:SF3">
    <property type="entry name" value="ATPASE GET3"/>
    <property type="match status" value="1"/>
</dbReference>
<dbReference type="Pfam" id="PF02374">
    <property type="entry name" value="ArsA_ATPase"/>
    <property type="match status" value="1"/>
</dbReference>
<dbReference type="SUPFAM" id="SSF52540">
    <property type="entry name" value="P-loop containing nucleoside triphosphate hydrolases"/>
    <property type="match status" value="1"/>
</dbReference>
<sequence length="339" mass="37417">MSTAVVQADDLMEPSLQSIVSQDTLRWIFVGGKGGVGKTTTSCSLAIQLAKARKSVLLISTDPAHNLSDAFGQKFGKEARLVDGYTNLSAMEIDPNGSIQDLLASGEGQGDDPMAGLGVGNMMQDLAFSIPGVDEAMSFAEVLKQVKSLSYEVIVFDTAPTGHTLRFLQFPTVLEKALAKLSQLSSQFGPMLNSILGSRGGLPGGQNIDELLQKMESLRETISEVNTQFKNPDMTTFVCVCIAEFLSLYETERMIQELTSYNIDTHAIVVNQLLFPKQGSECEQCNARRKMQKKYLEQIEELYEDFNVVRMPLLVEEVRGKEKLEKFSDMLIHPYVPPQ</sequence>
<comment type="function">
    <text evidence="1">ATPase required for the post-translational delivery of tail-anchored (TA) proteins to the endoplasmic reticulum. Recognizes and selectively binds the transmembrane domain of TA proteins in the cytosol. This complex then targets to the endoplasmic reticulum by membrane-bound receptors, where the tail-anchored protein is released for insertion. This process is regulated by ATP binding and hydrolysis. ATP binding drives the homodimer towards the closed dimer state, facilitating recognition of newly synthesized TA membrane proteins. ATP hydrolysis is required for insertion. Subsequently, the homodimer reverts towards the open dimer state, lowering its affinity for the membrane-bound receptor, and returning it to the cytosol to initiate a new round of targeting.</text>
</comment>
<comment type="subunit">
    <text evidence="1">Homodimer.</text>
</comment>
<comment type="subcellular location">
    <subcellularLocation>
        <location evidence="1">Cytoplasm</location>
    </subcellularLocation>
    <subcellularLocation>
        <location evidence="1">Endoplasmic reticulum</location>
    </subcellularLocation>
</comment>
<comment type="similarity">
    <text evidence="1">Belongs to the arsA ATPase family.</text>
</comment>
<name>GET3_ASPOR</name>
<evidence type="ECO:0000255" key="1">
    <source>
        <dbReference type="HAMAP-Rule" id="MF_03112"/>
    </source>
</evidence>
<reference key="1">
    <citation type="journal article" date="2005" name="Nature">
        <title>Genome sequencing and analysis of Aspergillus oryzae.</title>
        <authorList>
            <person name="Machida M."/>
            <person name="Asai K."/>
            <person name="Sano M."/>
            <person name="Tanaka T."/>
            <person name="Kumagai T."/>
            <person name="Terai G."/>
            <person name="Kusumoto K."/>
            <person name="Arima T."/>
            <person name="Akita O."/>
            <person name="Kashiwagi Y."/>
            <person name="Abe K."/>
            <person name="Gomi K."/>
            <person name="Horiuchi H."/>
            <person name="Kitamoto K."/>
            <person name="Kobayashi T."/>
            <person name="Takeuchi M."/>
            <person name="Denning D.W."/>
            <person name="Galagan J.E."/>
            <person name="Nierman W.C."/>
            <person name="Yu J."/>
            <person name="Archer D.B."/>
            <person name="Bennett J.W."/>
            <person name="Bhatnagar D."/>
            <person name="Cleveland T.E."/>
            <person name="Fedorova N.D."/>
            <person name="Gotoh O."/>
            <person name="Horikawa H."/>
            <person name="Hosoyama A."/>
            <person name="Ichinomiya M."/>
            <person name="Igarashi R."/>
            <person name="Iwashita K."/>
            <person name="Juvvadi P.R."/>
            <person name="Kato M."/>
            <person name="Kato Y."/>
            <person name="Kin T."/>
            <person name="Kokubun A."/>
            <person name="Maeda H."/>
            <person name="Maeyama N."/>
            <person name="Maruyama J."/>
            <person name="Nagasaki H."/>
            <person name="Nakajima T."/>
            <person name="Oda K."/>
            <person name="Okada K."/>
            <person name="Paulsen I."/>
            <person name="Sakamoto K."/>
            <person name="Sawano T."/>
            <person name="Takahashi M."/>
            <person name="Takase K."/>
            <person name="Terabayashi Y."/>
            <person name="Wortman J.R."/>
            <person name="Yamada O."/>
            <person name="Yamagata Y."/>
            <person name="Anazawa H."/>
            <person name="Hata Y."/>
            <person name="Koide Y."/>
            <person name="Komori T."/>
            <person name="Koyama Y."/>
            <person name="Minetoki T."/>
            <person name="Suharnan S."/>
            <person name="Tanaka A."/>
            <person name="Isono K."/>
            <person name="Kuhara S."/>
            <person name="Ogasawara N."/>
            <person name="Kikuchi H."/>
        </authorList>
    </citation>
    <scope>NUCLEOTIDE SEQUENCE [LARGE SCALE GENOMIC DNA]</scope>
    <source>
        <strain>ATCC 42149 / RIB 40</strain>
    </source>
</reference>
<keyword id="KW-0067">ATP-binding</keyword>
<keyword id="KW-0963">Cytoplasm</keyword>
<keyword id="KW-0256">Endoplasmic reticulum</keyword>
<keyword id="KW-0378">Hydrolase</keyword>
<keyword id="KW-0479">Metal-binding</keyword>
<keyword id="KW-0547">Nucleotide-binding</keyword>
<keyword id="KW-1185">Reference proteome</keyword>
<keyword id="KW-0813">Transport</keyword>
<keyword id="KW-0862">Zinc</keyword>
<protein>
    <recommendedName>
        <fullName evidence="1">ATPase get3</fullName>
        <ecNumber evidence="1">3.6.-.-</ecNumber>
    </recommendedName>
    <alternativeName>
        <fullName evidence="1">Arsenical pump-driving ATPase</fullName>
    </alternativeName>
    <alternativeName>
        <fullName evidence="1">Arsenite-stimulated ATPase</fullName>
    </alternativeName>
    <alternativeName>
        <fullName evidence="1">Golgi to ER traffic protein 3</fullName>
    </alternativeName>
    <alternativeName>
        <fullName evidence="1">Guided entry of tail-anchored proteins 3</fullName>
    </alternativeName>
</protein>